<dbReference type="EC" id="4.2.1.20" evidence="1"/>
<dbReference type="EMBL" id="CP000947">
    <property type="protein sequence ID" value="ACA31044.1"/>
    <property type="molecule type" value="Genomic_DNA"/>
</dbReference>
<dbReference type="RefSeq" id="WP_012340468.1">
    <property type="nucleotide sequence ID" value="NC_010519.1"/>
</dbReference>
<dbReference type="SMR" id="B0UU33"/>
<dbReference type="STRING" id="228400.HSM_1310"/>
<dbReference type="GeneID" id="31487613"/>
<dbReference type="KEGG" id="hsm:HSM_1310"/>
<dbReference type="HOGENOM" id="CLU_016734_0_4_6"/>
<dbReference type="UniPathway" id="UPA00035">
    <property type="reaction ID" value="UER00044"/>
</dbReference>
<dbReference type="GO" id="GO:0005829">
    <property type="term" value="C:cytosol"/>
    <property type="evidence" value="ECO:0007669"/>
    <property type="project" value="TreeGrafter"/>
</dbReference>
<dbReference type="GO" id="GO:0004834">
    <property type="term" value="F:tryptophan synthase activity"/>
    <property type="evidence" value="ECO:0007669"/>
    <property type="project" value="UniProtKB-UniRule"/>
</dbReference>
<dbReference type="CDD" id="cd04724">
    <property type="entry name" value="Tryptophan_synthase_alpha"/>
    <property type="match status" value="1"/>
</dbReference>
<dbReference type="FunFam" id="3.20.20.70:FF:000037">
    <property type="entry name" value="Tryptophan synthase alpha chain"/>
    <property type="match status" value="1"/>
</dbReference>
<dbReference type="Gene3D" id="3.20.20.70">
    <property type="entry name" value="Aldolase class I"/>
    <property type="match status" value="1"/>
</dbReference>
<dbReference type="HAMAP" id="MF_00131">
    <property type="entry name" value="Trp_synth_alpha"/>
    <property type="match status" value="1"/>
</dbReference>
<dbReference type="InterPro" id="IPR013785">
    <property type="entry name" value="Aldolase_TIM"/>
</dbReference>
<dbReference type="InterPro" id="IPR011060">
    <property type="entry name" value="RibuloseP-bd_barrel"/>
</dbReference>
<dbReference type="InterPro" id="IPR018204">
    <property type="entry name" value="Trp_synthase_alpha_AS"/>
</dbReference>
<dbReference type="InterPro" id="IPR002028">
    <property type="entry name" value="Trp_synthase_suA"/>
</dbReference>
<dbReference type="NCBIfam" id="TIGR00262">
    <property type="entry name" value="trpA"/>
    <property type="match status" value="1"/>
</dbReference>
<dbReference type="PANTHER" id="PTHR43406:SF1">
    <property type="entry name" value="TRYPTOPHAN SYNTHASE ALPHA CHAIN, CHLOROPLASTIC"/>
    <property type="match status" value="1"/>
</dbReference>
<dbReference type="PANTHER" id="PTHR43406">
    <property type="entry name" value="TRYPTOPHAN SYNTHASE, ALPHA CHAIN"/>
    <property type="match status" value="1"/>
</dbReference>
<dbReference type="Pfam" id="PF00290">
    <property type="entry name" value="Trp_syntA"/>
    <property type="match status" value="1"/>
</dbReference>
<dbReference type="SUPFAM" id="SSF51366">
    <property type="entry name" value="Ribulose-phoshate binding barrel"/>
    <property type="match status" value="1"/>
</dbReference>
<dbReference type="PROSITE" id="PS00167">
    <property type="entry name" value="TRP_SYNTHASE_ALPHA"/>
    <property type="match status" value="1"/>
</dbReference>
<sequence length="269" mass="29244">MGYFEQKFLQLQKQKQGAFVPFVTLCDPNFDRSFEIICTLVDNGADALELGFPFSDPLLDGSVIQAANHRALNAGCSTKESFQLIAKVRSKYPDIPISLLLCANLIYAQTLDGFYQRCAEVGVDAVLVADIPLLASEPYIQSAQKYDIQPVFICPPNADETTLKAVAEKSKGYIYLVSRAGVTSAENQQSAKNLANLIKGLKKYGSAPILQGFGIAQPQQVKDVLKSGVAGAISGSAIVQIIEQNLTDREKCLSELAEFVQKMKQATLL</sequence>
<feature type="chain" id="PRO_1000076358" description="Tryptophan synthase alpha chain">
    <location>
        <begin position="1"/>
        <end position="269"/>
    </location>
</feature>
<feature type="active site" description="Proton acceptor" evidence="1">
    <location>
        <position position="49"/>
    </location>
</feature>
<feature type="active site" description="Proton acceptor" evidence="1">
    <location>
        <position position="60"/>
    </location>
</feature>
<keyword id="KW-0028">Amino-acid biosynthesis</keyword>
<keyword id="KW-0057">Aromatic amino acid biosynthesis</keyword>
<keyword id="KW-0456">Lyase</keyword>
<keyword id="KW-0822">Tryptophan biosynthesis</keyword>
<evidence type="ECO:0000255" key="1">
    <source>
        <dbReference type="HAMAP-Rule" id="MF_00131"/>
    </source>
</evidence>
<protein>
    <recommendedName>
        <fullName evidence="1">Tryptophan synthase alpha chain</fullName>
        <ecNumber evidence="1">4.2.1.20</ecNumber>
    </recommendedName>
</protein>
<gene>
    <name evidence="1" type="primary">trpA</name>
    <name type="ordered locus">HSM_1310</name>
</gene>
<name>TRPA_HISS2</name>
<reference key="1">
    <citation type="submission" date="2008-02" db="EMBL/GenBank/DDBJ databases">
        <title>Complete sequence of Haemophilus somnus 2336.</title>
        <authorList>
            <consortium name="US DOE Joint Genome Institute"/>
            <person name="Siddaramappa S."/>
            <person name="Duncan A.J."/>
            <person name="Challacombe J.F."/>
            <person name="Rainey D."/>
            <person name="Gillaspy A.F."/>
            <person name="Carson M."/>
            <person name="Gipson J."/>
            <person name="Gipson M."/>
            <person name="Bruce D."/>
            <person name="Detter J.C."/>
            <person name="Han C.S."/>
            <person name="Land M."/>
            <person name="Tapia R."/>
            <person name="Thompson L.S."/>
            <person name="Orvis J."/>
            <person name="Zaitshik J."/>
            <person name="Barnes G."/>
            <person name="Brettin T.S."/>
            <person name="Dyer D.W."/>
            <person name="Inzana T.J."/>
        </authorList>
    </citation>
    <scope>NUCLEOTIDE SEQUENCE [LARGE SCALE GENOMIC DNA]</scope>
    <source>
        <strain>2336</strain>
    </source>
</reference>
<comment type="function">
    <text evidence="1">The alpha subunit is responsible for the aldol cleavage of indoleglycerol phosphate to indole and glyceraldehyde 3-phosphate.</text>
</comment>
<comment type="catalytic activity">
    <reaction evidence="1">
        <text>(1S,2R)-1-C-(indol-3-yl)glycerol 3-phosphate + L-serine = D-glyceraldehyde 3-phosphate + L-tryptophan + H2O</text>
        <dbReference type="Rhea" id="RHEA:10532"/>
        <dbReference type="ChEBI" id="CHEBI:15377"/>
        <dbReference type="ChEBI" id="CHEBI:33384"/>
        <dbReference type="ChEBI" id="CHEBI:57912"/>
        <dbReference type="ChEBI" id="CHEBI:58866"/>
        <dbReference type="ChEBI" id="CHEBI:59776"/>
        <dbReference type="EC" id="4.2.1.20"/>
    </reaction>
</comment>
<comment type="pathway">
    <text evidence="1">Amino-acid biosynthesis; L-tryptophan biosynthesis; L-tryptophan from chorismate: step 5/5.</text>
</comment>
<comment type="subunit">
    <text evidence="1">Tetramer of two alpha and two beta chains.</text>
</comment>
<comment type="similarity">
    <text evidence="1">Belongs to the TrpA family.</text>
</comment>
<accession>B0UU33</accession>
<proteinExistence type="inferred from homology"/>
<organism>
    <name type="scientific">Histophilus somni (strain 2336)</name>
    <name type="common">Haemophilus somnus</name>
    <dbReference type="NCBI Taxonomy" id="228400"/>
    <lineage>
        <taxon>Bacteria</taxon>
        <taxon>Pseudomonadati</taxon>
        <taxon>Pseudomonadota</taxon>
        <taxon>Gammaproteobacteria</taxon>
        <taxon>Pasteurellales</taxon>
        <taxon>Pasteurellaceae</taxon>
        <taxon>Histophilus</taxon>
    </lineage>
</organism>